<organism>
    <name type="scientific">Human herpesvirus 1 (strain 17)</name>
    <name type="common">HHV-1</name>
    <name type="synonym">Human herpes simplex virus 1</name>
    <dbReference type="NCBI Taxonomy" id="10299"/>
    <lineage>
        <taxon>Viruses</taxon>
        <taxon>Duplodnaviria</taxon>
        <taxon>Heunggongvirae</taxon>
        <taxon>Peploviricota</taxon>
        <taxon>Herviviricetes</taxon>
        <taxon>Herpesvirales</taxon>
        <taxon>Orthoherpesviridae</taxon>
        <taxon>Alphaherpesvirinae</taxon>
        <taxon>Simplexvirus</taxon>
        <taxon>Simplexvirus humanalpha1</taxon>
        <taxon>Human herpesvirus 1</taxon>
    </lineage>
</organism>
<evidence type="ECO:0000255" key="1">
    <source>
        <dbReference type="HAMAP-Rule" id="MF_04017"/>
    </source>
</evidence>
<evidence type="ECO:0000256" key="2">
    <source>
        <dbReference type="SAM" id="MobiDB-lite"/>
    </source>
</evidence>
<evidence type="ECO:0000269" key="3">
    <source>
    </source>
</evidence>
<evidence type="ECO:0000269" key="4">
    <source>
    </source>
</evidence>
<evidence type="ECO:0000269" key="5">
    <source>
    </source>
</evidence>
<sequence>MNAHLANEVQTISATARVGPRSLVHVIISSECLAAAGIPLAALMRGRPGLGTAANFQVEIQTRAHATGDCTPWCTAFAAYVPADAVGELLAPVVPAHPGLLPRASSAGGLFVSLPVVCDAQGVYDPYAVAALRLAWGSGASCARVILFSYDELVPPNTRYAADSTRIMRVCRHLCRYVALLGAAAPPAAKEAAAHLSMGLGESASPRPQPLARPHAGAPADPPIVGASDPPISPEEQLTAPGGDTTAAQDVSIAQENEEILALVQRAVQDVTRRHPVRARTGRAACGVASGLRQGALVHQAVSGGAMGAADADAVLAGLEPPGGGRFVAPAPHGPGGEDILNDVLTLTPGTAKPRSLVEWLDRGWEALAGGDRPDWLWSRRSISVVLRHHYGTKQRFVVVSYENSVAWGGRRARPPLLSSALATALTEACAAERVVRPHQLSPAGQAELLLRFPALEVPLRHPRPVLPPFDIAAEVAFTARIHLACLRALGQAIRAALQGGPRISQRLRYDFGPDQRAWLGEVTRRFPILLENLMRAVEGTAPDAFFHTAYALAVLAHLGGRGGRGRRVVPLGDDLPARFADSDGHYVFDYYSTSGDTLRLNNRPIAVAMDGDVSKREQSKCRFMEAVPSTAPRRVCEQYLPGESYAYLCLGFNRRLCGIVVFPGGFAFTINIAAYLSLSDPVARAAVLRFCRKVSSGNGRSR</sequence>
<dbReference type="EMBL" id="X14112">
    <property type="protein sequence ID" value="CAA32329.1"/>
    <property type="molecule type" value="Genomic_DNA"/>
</dbReference>
<dbReference type="PIR" id="H30083">
    <property type="entry name" value="WMBET7"/>
</dbReference>
<dbReference type="PDB" id="8XA0">
    <property type="method" value="EM"/>
    <property type="resolution" value="4.00 A"/>
    <property type="chains" value="h=1-696"/>
</dbReference>
<dbReference type="PDBsum" id="8XA0"/>
<dbReference type="EMDB" id="EMD-38190"/>
<dbReference type="SMR" id="P10201"/>
<dbReference type="BioGRID" id="971425">
    <property type="interactions" value="9"/>
</dbReference>
<dbReference type="DIP" id="DIP-60386N"/>
<dbReference type="IntAct" id="P10201">
    <property type="interactions" value="2"/>
</dbReference>
<dbReference type="Proteomes" id="UP000009294">
    <property type="component" value="Segment"/>
</dbReference>
<dbReference type="GO" id="GO:0042025">
    <property type="term" value="C:host cell nucleus"/>
    <property type="evidence" value="ECO:0007669"/>
    <property type="project" value="UniProtKB-SubCell"/>
</dbReference>
<dbReference type="GO" id="GO:0019028">
    <property type="term" value="C:viral capsid"/>
    <property type="evidence" value="ECO:0007669"/>
    <property type="project" value="UniProtKB-KW"/>
</dbReference>
<dbReference type="GO" id="GO:0051276">
    <property type="term" value="P:chromosome organization"/>
    <property type="evidence" value="ECO:0007669"/>
    <property type="project" value="InterPro"/>
</dbReference>
<dbReference type="HAMAP" id="MF_04017">
    <property type="entry name" value="HSV_CVC1"/>
    <property type="match status" value="1"/>
</dbReference>
<dbReference type="InterPro" id="IPR007640">
    <property type="entry name" value="UL17-like"/>
</dbReference>
<dbReference type="Pfam" id="PF04559">
    <property type="entry name" value="Herpes_UL17"/>
    <property type="match status" value="1"/>
</dbReference>
<protein>
    <recommendedName>
        <fullName evidence="1">Capsid vertex component 1</fullName>
    </recommendedName>
</protein>
<proteinExistence type="evidence at protein level"/>
<accession>P10201</accession>
<reference key="1">
    <citation type="journal article" date="1988" name="J. Gen. Virol.">
        <title>The complete DNA sequence of the long unique region in the genome of herpes simplex virus type 1.</title>
        <authorList>
            <person name="McGeoch D.J."/>
            <person name="Dalrymple M.A."/>
            <person name="Davison A.J."/>
            <person name="Dolan A."/>
            <person name="Frame M.C."/>
            <person name="McNab D."/>
            <person name="Perry L.J."/>
            <person name="Scott J.E."/>
            <person name="Taylor P."/>
        </authorList>
    </citation>
    <scope>NUCLEOTIDE SEQUENCE [GENOMIC DNA]</scope>
</reference>
<reference key="2">
    <citation type="journal article" date="2000" name="Arch. Virol.">
        <title>Herpes simplex virus UL17 protein is associated with B capsids and colocalizes with ICP35 and VP5 in infected cells.</title>
        <authorList>
            <person name="Goshima F."/>
            <person name="Watanabe D."/>
            <person name="Takakuwa H."/>
            <person name="Wada K."/>
            <person name="Daikoku T."/>
            <person name="Yamada M."/>
            <person name="Nishiyama Y."/>
        </authorList>
    </citation>
    <scope>SUBCELLULAR LOCATION</scope>
</reference>
<reference key="3">
    <citation type="journal article" date="2007" name="Mol. Cell">
        <title>Allosteric signaling and a nuclear exit strategy: binding of UL25/UL17 heterodimers to DNA-Filled HSV-1 capsids.</title>
        <authorList>
            <person name="Trus B.L."/>
            <person name="Newcomb W.W."/>
            <person name="Cheng N."/>
            <person name="Cardone G."/>
            <person name="Marekov L."/>
            <person name="Homa F.L."/>
            <person name="Brown J.C."/>
            <person name="Steven A.C."/>
        </authorList>
    </citation>
    <scope>FUNCTION</scope>
    <scope>INTERACTION WITH UL25</scope>
</reference>
<reference key="4">
    <citation type="journal article" date="2011" name="J. Virol.">
        <title>The herpes simplex virus 1 UL17 protein is the second constituent of the capsid vertex-specific component required for DNA packaging and retention.</title>
        <authorList>
            <person name="Toropova K."/>
            <person name="Huffman J.B."/>
            <person name="Homa F.L."/>
            <person name="Conway J.F."/>
        </authorList>
    </citation>
    <scope>FUNCTION</scope>
</reference>
<comment type="function">
    <text evidence="1 4 5">Capsid vertex-specific component that plays a role during viral DNA encapsidation, assuring correct genome cleavage and presumably stabilizing capsids that contain full-length viral genomes.</text>
</comment>
<comment type="subunit">
    <text evidence="1 4">Interacts (via C-terminus) with capsid vertex component 2/CVC2.</text>
</comment>
<comment type="subcellular location">
    <subcellularLocation>
        <location evidence="1 3">Virion</location>
    </subcellularLocation>
    <subcellularLocation>
        <location evidence="1 3">Host nucleus</location>
    </subcellularLocation>
</comment>
<comment type="similarity">
    <text evidence="1">Belongs to the herpesviridae CVC1 protein family.</text>
</comment>
<keyword id="KW-0002">3D-structure</keyword>
<keyword id="KW-0167">Capsid protein</keyword>
<keyword id="KW-1048">Host nucleus</keyword>
<keyword id="KW-0426">Late protein</keyword>
<keyword id="KW-1185">Reference proteome</keyword>
<keyword id="KW-0231">Viral genome packaging</keyword>
<keyword id="KW-1188">Viral release from host cell</keyword>
<keyword id="KW-0946">Virion</keyword>
<organismHost>
    <name type="scientific">Homo sapiens</name>
    <name type="common">Human</name>
    <dbReference type="NCBI Taxonomy" id="9606"/>
</organismHost>
<feature type="chain" id="PRO_0000115958" description="Capsid vertex component 1">
    <location>
        <begin position="1"/>
        <end position="703"/>
    </location>
</feature>
<feature type="region of interest" description="Disordered" evidence="2">
    <location>
        <begin position="200"/>
        <end position="246"/>
    </location>
</feature>
<name>CVC1_HHV11</name>
<gene>
    <name evidence="1" type="primary">CVC1</name>
    <name type="ordered locus">UL17</name>
</gene>